<reference evidence="6" key="1">
    <citation type="journal article" date="2010" name="Stand. Genomic Sci.">
        <title>Complete genome sequence of Meiothermus silvanus type strain (VI-R2).</title>
        <authorList>
            <person name="Sikorski J."/>
            <person name="Tindall B.J."/>
            <person name="Lowry S."/>
            <person name="Lucas S."/>
            <person name="Nolan M."/>
            <person name="Copeland A."/>
            <person name="Glavina Del Rio T."/>
            <person name="Tice H."/>
            <person name="Cheng J.F."/>
            <person name="Han C."/>
            <person name="Pitluck S."/>
            <person name="Liolios K."/>
            <person name="Ivanova N."/>
            <person name="Mavromatis K."/>
            <person name="Mikhailova N."/>
            <person name="Pati A."/>
            <person name="Goodwin L."/>
            <person name="Chen A."/>
            <person name="Palaniappan K."/>
            <person name="Land M."/>
            <person name="Hauser L."/>
            <person name="Chang Y.J."/>
            <person name="Jeffries C.D."/>
            <person name="Rohde M."/>
            <person name="Goker M."/>
            <person name="Woyke T."/>
            <person name="Bristow J."/>
            <person name="Eisen J.A."/>
            <person name="Markowitz V."/>
            <person name="Hugenholtz P."/>
            <person name="Kyrpides N.C."/>
            <person name="Klenk H.P."/>
            <person name="Lapidus A."/>
        </authorList>
    </citation>
    <scope>NUCLEOTIDE SEQUENCE [LARGE SCALE GENOMIC DNA]</scope>
    <source>
        <strain>ATCC 700542 / DSM 9946 / NBRC 106475 / NCIMB 13440 / VI-R2</strain>
        <plasmid>pMESIL02</plasmid>
    </source>
</reference>
<reference key="2">
    <citation type="journal article" date="2024" name="Nucleic Acids Res.">
        <title>Innate programmable DNA binding by CRISPR-Cas12m effectors enable efficient base editing.</title>
        <authorList>
            <person name="Bigelyte G."/>
            <person name="Duchovska B."/>
            <person name="Zedaveinyte R."/>
            <person name="Sasnauskas G."/>
            <person name="Sinkunas T."/>
            <person name="Dalgediene I."/>
            <person name="Tamulaitiene G."/>
            <person name="Silanskas A."/>
            <person name="Kazlauskas D."/>
            <person name="Valancauskas L."/>
            <person name="Madariaga-Marcos J."/>
            <person name="Seidel R."/>
            <person name="Siksnys V."/>
            <person name="Karvelis T."/>
        </authorList>
    </citation>
    <scope>FUNCTION IN CRRNA PROCESSING</scope>
    <scope>ACTIVITY REGULATION</scope>
    <scope>COFACTOR</scope>
    <scope>DNA-BINDING</scope>
    <scope>RNA-BINDING</scope>
    <scope>MUTAGENESIS OF ASP-274</scope>
    <source>
        <strain>ATCC 700542 / DSM 9946 / NBRC 106475 / NCIMB 13440 / VI-R2</strain>
    </source>
</reference>
<organism>
    <name type="scientific">Allomeiothermus silvanus (strain ATCC 700542 / DSM 9946 / NBRC 106475 / NCIMB 13440 / VI-R2)</name>
    <name type="common">Thermus silvanus</name>
    <dbReference type="NCBI Taxonomy" id="526227"/>
    <lineage>
        <taxon>Bacteria</taxon>
        <taxon>Thermotogati</taxon>
        <taxon>Deinococcota</taxon>
        <taxon>Deinococci</taxon>
        <taxon>Thermales</taxon>
        <taxon>Thermaceae</taxon>
        <taxon>Allomeiothermus</taxon>
    </lineage>
</organism>
<evidence type="ECO:0000250" key="1">
    <source>
        <dbReference type="UniProtKB" id="P0DXB1"/>
    </source>
</evidence>
<evidence type="ECO:0000269" key="2">
    <source>
    </source>
</evidence>
<evidence type="ECO:0000303" key="3">
    <source>
    </source>
</evidence>
<evidence type="ECO:0000305" key="4"/>
<evidence type="ECO:0000305" key="5">
    <source>
    </source>
</evidence>
<evidence type="ECO:0000312" key="6">
    <source>
        <dbReference type="EMBL" id="ADH65437.1"/>
    </source>
</evidence>
<comment type="function">
    <text evidence="2 5">CRISPR (clustered regularly interspaced short palindromic repeat), is an adaptive immune system that provides protection against mobile genetic elements (viruses, transposable elements and conjugative plasmids) (Probable) (PubMed:38261981). CRISPR clusters contain sequences complementary to antecedent mobile elements and target invading nucleic acids (Probable) (PubMed:38261981). CRISPR clusters are transcribed and processed into CRISPR RNA (crRNA) (PubMed:38261981). Recognizes a short motif in the CRISPR repeat sequences (the 5' PAM or protospacer adjacent motif, 5'-TT/CN-3' in this organism) to help distinguish self versus nonself, as targets within the bacterial CRISPR locus do not have PAMs (PubMed:38261981). Cas12m-crRNA binds DNA in a PAM-dependent, crRNA-guided fashion (PubMed:38261981). DNA-binding probably inhibits transcription, leading to gene silencing (Probable) (PubMed:38261981). No dsDNA, ssDNA or RNA nuclease activity is seen for the crRNA-Cas12m complex (PubMed:38261981). Upon expression in E.coli as a CRISPR region preferentially binds to its associated crRNA (PubMed:38261981). Is required to process pre-crRNA to mature crRNA without a tracrRNA; processing is Mg(2+)-dependent and does not require the predicted RuvC domain catalytic site (PubMed:38261981).</text>
</comment>
<comment type="cofactor">
    <cofactor evidence="2">
        <name>Mg(2+)</name>
        <dbReference type="ChEBI" id="CHEBI:18420"/>
    </cofactor>
    <text evidence="1">Binds only 1 Mg(2+) as opposed to 2 usually seen in other Cas12 enzymes; lack of the second Mg(2+) results in loss of target DNA cleavage activity.</text>
</comment>
<comment type="cofactor">
    <cofactor evidence="1">
        <name>Zn(2+)</name>
        <dbReference type="ChEBI" id="CHEBI:29105"/>
    </cofactor>
    <text evidence="1">Binds 1 Zn(2+) within the target nucleic-acid binding (TNB) domain.</text>
</comment>
<comment type="activity regulation">
    <text evidence="2">Pre-crRNA processing is inhibited by EDTA (PubMed:38261981).</text>
</comment>
<comment type="domain">
    <text evidence="1">Has a bilobed structure, with a recognition (REC) lobe and nuclease (NUC) lobe. The REC lobe (residues 1-257) is formed by the discontinuous recognition (REC) and wedge (WED) domains, while the NUC lobe (residues 271-536) is formed by the discontinuous RuvC and target nucleic-acid binding (TNB) domains. The crRNA-single-strand target DNA duplex is bound in the central channel between the 2 lobes while the non-target single stranded DNA is bound to pockets in the REC and RuvC domains.</text>
</comment>
<comment type="miscellaneous">
    <text evidence="5">Part of a type V-M CRISPR-Cas system.</text>
</comment>
<comment type="similarity">
    <text evidence="3">Belongs to the CRISPR-associated DNA-binding protein Cas12m family.</text>
</comment>
<feature type="chain" id="PRO_0000460482" description="CRISPR-associated DNA-binding protein Cas12m">
    <location>
        <begin position="1"/>
        <end position="536"/>
    </location>
</feature>
<feature type="region of interest" description="Recognition domain (REC1-N)" evidence="1">
    <location>
        <begin position="1"/>
        <end position="59"/>
    </location>
</feature>
<feature type="region of interest" description="Recognition domain (REC2)" evidence="1">
    <location>
        <begin position="60"/>
        <end position="105"/>
    </location>
</feature>
<feature type="region of interest" description="Recognition domain (REC1-C)" evidence="1">
    <location>
        <begin position="106"/>
        <end position="159"/>
    </location>
</feature>
<feature type="region of interest" description="Wedge domain (WED)" evidence="1">
    <location>
        <begin position="160"/>
        <end position="257"/>
    </location>
</feature>
<feature type="region of interest" description="Linker" evidence="1">
    <location>
        <begin position="258"/>
        <end position="270"/>
    </location>
</feature>
<feature type="region of interest" description="RuvC-I" evidence="1">
    <location>
        <begin position="271"/>
        <end position="481"/>
    </location>
</feature>
<feature type="region of interest" description="Target nucleic-acid binding (TNB)" evidence="1">
    <location>
        <begin position="482"/>
        <end position="516"/>
    </location>
</feature>
<feature type="region of interest" description="RuvC-II" evidence="1">
    <location>
        <begin position="517"/>
        <end position="536"/>
    </location>
</feature>
<feature type="binding site" evidence="4">
    <location>
        <position position="489"/>
    </location>
    <ligand>
        <name>Zn(2+)</name>
        <dbReference type="ChEBI" id="CHEBI:29105"/>
    </ligand>
</feature>
<feature type="binding site" evidence="1">
    <location>
        <position position="492"/>
    </location>
    <ligand>
        <name>Zn(2+)</name>
        <dbReference type="ChEBI" id="CHEBI:29105"/>
    </ligand>
</feature>
<feature type="binding site" evidence="1">
    <location>
        <position position="508"/>
    </location>
    <ligand>
        <name>Zn(2+)</name>
        <dbReference type="ChEBI" id="CHEBI:29105"/>
    </ligand>
</feature>
<feature type="binding site" evidence="1">
    <location>
        <position position="511"/>
    </location>
    <ligand>
        <name>Zn(2+)</name>
        <dbReference type="ChEBI" id="CHEBI:29105"/>
    </ligand>
</feature>
<feature type="binding site" evidence="1">
    <location>
        <position position="518"/>
    </location>
    <ligand>
        <name>Mg(2+)</name>
        <dbReference type="ChEBI" id="CHEBI:18420"/>
    </ligand>
</feature>
<feature type="mutagenesis site" description="No change in pre-crRNA processing." evidence="2">
    <original>D</original>
    <variation>A</variation>
    <location>
        <position position="274"/>
    </location>
</feature>
<name>CS12M_ALLS1</name>
<proteinExistence type="evidence at protein level"/>
<protein>
    <recommendedName>
        <fullName evidence="3">CRISPR-associated DNA-binding protein Cas12m</fullName>
        <shortName evidence="3">MsCas12m</shortName>
    </recommendedName>
</protein>
<keyword id="KW-0051">Antiviral defense</keyword>
<keyword id="KW-0238">DNA-binding</keyword>
<keyword id="KW-0460">Magnesium</keyword>
<keyword id="KW-0479">Metal-binding</keyword>
<keyword id="KW-0614">Plasmid</keyword>
<keyword id="KW-1185">Reference proteome</keyword>
<keyword id="KW-0694">RNA-binding</keyword>
<keyword id="KW-0804">Transcription</keyword>
<keyword id="KW-0805">Transcription regulation</keyword>
<keyword id="KW-0862">Zinc</keyword>
<sequence>MPFGKKARHVKAYQFGADAPQEGMEAVLEQHRLRTDYYNALVEMELRQREERTALLANLAAESGLESPNQVYERLKAAGEKGIRKHPEYVAARERQKALYGHPRLLELQSRQREERNALRRSFGAKGLYSSNYLDVERAFDKARQSPELRFRRYSPHEGRLAVLYTEGLPMREIGSDTRVQLPLPDPIIYRDRATRRKHQRVLMKFRVRSVERQPLWITVPVYLHRELPDGVCREVSLHWHRVADRLRWTVSVVVEVEGPPVASPTGRGAVAVDLGWRRVEGGLRAGFWVGEDGAGGEIALSEGDLKQFSKVEDLRSIRDQHLNALKEALAAWLEAPPAPLPDWLAEETKTLPQWRSPARFAALFRRWQSERVHADEAAYGLLEGWHKRDRHLWQYEANLREQMILRRREQYRVLAATLARQYDALIVEDFNLRAAAELDQGGSDLPDAARRYRTIASPSTLRDALVNAFAQRGKPVRKLNPAHTTTDCHACGGALVGDPAKELRLYCPTCERFYDQDENAARNLLRRAQEVQAQV</sequence>
<geneLocation type="plasmid" evidence="6">
    <name>pMESIL02</name>
</geneLocation>
<accession>D7BJT1</accession>
<gene>
    <name evidence="3" type="primary">cas12m</name>
    <name evidence="6" type="ORF">Mesil_3650</name>
</gene>
<dbReference type="EMBL" id="CP002044">
    <property type="protein sequence ID" value="ADH65437.1"/>
    <property type="molecule type" value="Genomic_DNA"/>
</dbReference>
<dbReference type="RefSeq" id="WP_013159911.1">
    <property type="nucleotide sequence ID" value="NC_014214.1"/>
</dbReference>
<dbReference type="SMR" id="D7BJT1"/>
<dbReference type="KEGG" id="msv:Mesil_3650"/>
<dbReference type="HOGENOM" id="CLU_507886_0_0_0"/>
<dbReference type="OrthoDB" id="1551477at2"/>
<dbReference type="Proteomes" id="UP000001916">
    <property type="component" value="Plasmid pMESIL02"/>
</dbReference>
<dbReference type="GO" id="GO:0003677">
    <property type="term" value="F:DNA binding"/>
    <property type="evidence" value="ECO:0007669"/>
    <property type="project" value="UniProtKB-KW"/>
</dbReference>
<dbReference type="GO" id="GO:0046872">
    <property type="term" value="F:metal ion binding"/>
    <property type="evidence" value="ECO:0007669"/>
    <property type="project" value="UniProtKB-KW"/>
</dbReference>
<dbReference type="GO" id="GO:0003723">
    <property type="term" value="F:RNA binding"/>
    <property type="evidence" value="ECO:0007669"/>
    <property type="project" value="UniProtKB-KW"/>
</dbReference>
<dbReference type="GO" id="GO:0051607">
    <property type="term" value="P:defense response to virus"/>
    <property type="evidence" value="ECO:0007669"/>
    <property type="project" value="UniProtKB-KW"/>
</dbReference>
<dbReference type="InterPro" id="IPR010095">
    <property type="entry name" value="Cas12f1-like_TNB"/>
</dbReference>
<dbReference type="Pfam" id="PF07282">
    <property type="entry name" value="Cas12f1-like_TNB"/>
    <property type="match status" value="1"/>
</dbReference>